<gene>
    <name type="ordered locus">HI_1272</name>
</gene>
<evidence type="ECO:0000255" key="1">
    <source>
        <dbReference type="PROSITE-ProRule" id="PRU00434"/>
    </source>
</evidence>
<evidence type="ECO:0000305" key="2"/>
<accession>Q57243</accession>
<accession>O05049</accession>
<reference key="1">
    <citation type="journal article" date="1995" name="Science">
        <title>Whole-genome random sequencing and assembly of Haemophilus influenzae Rd.</title>
        <authorList>
            <person name="Fleischmann R.D."/>
            <person name="Adams M.D."/>
            <person name="White O."/>
            <person name="Clayton R.A."/>
            <person name="Kirkness E.F."/>
            <person name="Kerlavage A.R."/>
            <person name="Bult C.J."/>
            <person name="Tomb J.-F."/>
            <person name="Dougherty B.A."/>
            <person name="Merrick J.M."/>
            <person name="McKenney K."/>
            <person name="Sutton G.G."/>
            <person name="FitzHugh W."/>
            <person name="Fields C.A."/>
            <person name="Gocayne J.D."/>
            <person name="Scott J.D."/>
            <person name="Shirley R."/>
            <person name="Liu L.-I."/>
            <person name="Glodek A."/>
            <person name="Kelley J.M."/>
            <person name="Weidman J.F."/>
            <person name="Phillips C.A."/>
            <person name="Spriggs T."/>
            <person name="Hedblom E."/>
            <person name="Cotton M.D."/>
            <person name="Utterback T.R."/>
            <person name="Hanna M.C."/>
            <person name="Nguyen D.T."/>
            <person name="Saudek D.M."/>
            <person name="Brandon R.C."/>
            <person name="Fine L.D."/>
            <person name="Fritchman J.L."/>
            <person name="Fuhrmann J.L."/>
            <person name="Geoghagen N.S.M."/>
            <person name="Gnehm C.L."/>
            <person name="McDonald L.A."/>
            <person name="Small K.V."/>
            <person name="Fraser C.M."/>
            <person name="Smith H.O."/>
            <person name="Venter J.C."/>
        </authorList>
    </citation>
    <scope>NUCLEOTIDE SEQUENCE [LARGE SCALE GENOMIC DNA]</scope>
    <source>
        <strain>ATCC 51907 / DSM 11121 / KW20 / Rd</strain>
    </source>
</reference>
<sequence length="263" mass="29583">MVISARAKIMLLETQNLAIGYEGKTLVQHIQFTLEENQICCLLGANGAGKSTFLKTLLGLQPPIGGDIVWQGKSLSDYSPTELARHIAYVPQAHSHLFPFLVQDMVMMGRSAFLKWYQTPKKSDLDLALMALQELEIAHLAQRYYHQLSGGEKQLVLIARAIAQQAKLLIMDEPTSSLDFGNQIRVLEKIKQLQKQNIALIISTHNPQQAAFLGDNIVLLDQQFGFQQGDKKHLLTLENLAKIYRTSPELLHQHLNNHIEKSL</sequence>
<protein>
    <recommendedName>
        <fullName>Uncharacterized ABC transporter ATP-binding protein HI_1272</fullName>
    </recommendedName>
</protein>
<proteinExistence type="inferred from homology"/>
<dbReference type="EMBL" id="L42023">
    <property type="protein sequence ID" value="AAC22920.1"/>
    <property type="molecule type" value="Genomic_DNA"/>
</dbReference>
<dbReference type="PIR" id="F64113">
    <property type="entry name" value="F64113"/>
</dbReference>
<dbReference type="RefSeq" id="NP_439425.1">
    <property type="nucleotide sequence ID" value="NC_000907.1"/>
</dbReference>
<dbReference type="SMR" id="Q57243"/>
<dbReference type="STRING" id="71421.HI_1272"/>
<dbReference type="EnsemblBacteria" id="AAC22920">
    <property type="protein sequence ID" value="AAC22920"/>
    <property type="gene ID" value="HI_1272"/>
</dbReference>
<dbReference type="KEGG" id="hin:HI_1272"/>
<dbReference type="PATRIC" id="fig|71421.8.peg.1323"/>
<dbReference type="eggNOG" id="COG1120">
    <property type="taxonomic scope" value="Bacteria"/>
</dbReference>
<dbReference type="HOGENOM" id="CLU_000604_1_11_6"/>
<dbReference type="OrthoDB" id="5292475at2"/>
<dbReference type="PhylomeDB" id="Q57243"/>
<dbReference type="BioCyc" id="HINF71421:G1GJ1-1297-MONOMER"/>
<dbReference type="Proteomes" id="UP000000579">
    <property type="component" value="Chromosome"/>
</dbReference>
<dbReference type="GO" id="GO:0043190">
    <property type="term" value="C:ATP-binding cassette (ABC) transporter complex"/>
    <property type="evidence" value="ECO:0000318"/>
    <property type="project" value="GO_Central"/>
</dbReference>
<dbReference type="GO" id="GO:0005524">
    <property type="term" value="F:ATP binding"/>
    <property type="evidence" value="ECO:0007669"/>
    <property type="project" value="UniProtKB-KW"/>
</dbReference>
<dbReference type="GO" id="GO:0016887">
    <property type="term" value="F:ATP hydrolysis activity"/>
    <property type="evidence" value="ECO:0007669"/>
    <property type="project" value="InterPro"/>
</dbReference>
<dbReference type="GO" id="GO:0042626">
    <property type="term" value="F:ATPase-coupled transmembrane transporter activity"/>
    <property type="evidence" value="ECO:0000318"/>
    <property type="project" value="GO_Central"/>
</dbReference>
<dbReference type="CDD" id="cd03214">
    <property type="entry name" value="ABC_Iron-Siderophores_B12_Hemin"/>
    <property type="match status" value="1"/>
</dbReference>
<dbReference type="FunFam" id="3.40.50.300:FF:000134">
    <property type="entry name" value="Iron-enterobactin ABC transporter ATP-binding protein"/>
    <property type="match status" value="1"/>
</dbReference>
<dbReference type="Gene3D" id="3.40.50.300">
    <property type="entry name" value="P-loop containing nucleotide triphosphate hydrolases"/>
    <property type="match status" value="1"/>
</dbReference>
<dbReference type="InterPro" id="IPR003593">
    <property type="entry name" value="AAA+_ATPase"/>
</dbReference>
<dbReference type="InterPro" id="IPR003439">
    <property type="entry name" value="ABC_transporter-like_ATP-bd"/>
</dbReference>
<dbReference type="InterPro" id="IPR017871">
    <property type="entry name" value="ABC_transporter-like_CS"/>
</dbReference>
<dbReference type="InterPro" id="IPR050153">
    <property type="entry name" value="Metal_Ion_Import_ABC"/>
</dbReference>
<dbReference type="InterPro" id="IPR027417">
    <property type="entry name" value="P-loop_NTPase"/>
</dbReference>
<dbReference type="PANTHER" id="PTHR42734">
    <property type="entry name" value="METAL TRANSPORT SYSTEM ATP-BINDING PROTEIN TM_0124-RELATED"/>
    <property type="match status" value="1"/>
</dbReference>
<dbReference type="PANTHER" id="PTHR42734:SF6">
    <property type="entry name" value="MOLYBDATE IMPORT ATP-BINDING PROTEIN MOLC"/>
    <property type="match status" value="1"/>
</dbReference>
<dbReference type="Pfam" id="PF00005">
    <property type="entry name" value="ABC_tran"/>
    <property type="match status" value="1"/>
</dbReference>
<dbReference type="SMART" id="SM00382">
    <property type="entry name" value="AAA"/>
    <property type="match status" value="1"/>
</dbReference>
<dbReference type="SUPFAM" id="SSF52540">
    <property type="entry name" value="P-loop containing nucleoside triphosphate hydrolases"/>
    <property type="match status" value="1"/>
</dbReference>
<dbReference type="PROSITE" id="PS00211">
    <property type="entry name" value="ABC_TRANSPORTER_1"/>
    <property type="match status" value="1"/>
</dbReference>
<dbReference type="PROSITE" id="PS50893">
    <property type="entry name" value="ABC_TRANSPORTER_2"/>
    <property type="match status" value="1"/>
</dbReference>
<organism>
    <name type="scientific">Haemophilus influenzae (strain ATCC 51907 / DSM 11121 / KW20 / Rd)</name>
    <dbReference type="NCBI Taxonomy" id="71421"/>
    <lineage>
        <taxon>Bacteria</taxon>
        <taxon>Pseudomonadati</taxon>
        <taxon>Pseudomonadota</taxon>
        <taxon>Gammaproteobacteria</taxon>
        <taxon>Pasteurellales</taxon>
        <taxon>Pasteurellaceae</taxon>
        <taxon>Haemophilus</taxon>
    </lineage>
</organism>
<keyword id="KW-0067">ATP-binding</keyword>
<keyword id="KW-0547">Nucleotide-binding</keyword>
<keyword id="KW-1185">Reference proteome</keyword>
<keyword id="KW-0813">Transport</keyword>
<name>Y1272_HAEIN</name>
<comment type="similarity">
    <text evidence="2">Belongs to the ABC transporter superfamily.</text>
</comment>
<feature type="chain" id="PRO_0000093205" description="Uncharacterized ABC transporter ATP-binding protein HI_1272">
    <location>
        <begin position="1"/>
        <end position="263"/>
    </location>
</feature>
<feature type="domain" description="ABC transporter" evidence="1">
    <location>
        <begin position="12"/>
        <end position="247"/>
    </location>
</feature>
<feature type="binding site" evidence="1">
    <location>
        <begin position="44"/>
        <end position="51"/>
    </location>
    <ligand>
        <name>ATP</name>
        <dbReference type="ChEBI" id="CHEBI:30616"/>
    </ligand>
</feature>